<accession>P21641</accession>
<protein>
    <recommendedName>
        <fullName>Oleosin Zm-II</fullName>
    </recommendedName>
    <alternativeName>
        <fullName>Lipid body-associated protein L2</fullName>
    </alternativeName>
    <alternativeName>
        <fullName>Oleosin 18 kDa</fullName>
    </alternativeName>
</protein>
<feature type="initiator methionine" description="Removed" evidence="1">
    <location>
        <position position="1"/>
    </location>
</feature>
<feature type="chain" id="PRO_0000108145" description="Oleosin Zm-II">
    <location>
        <begin position="2"/>
        <end position="187"/>
    </location>
</feature>
<feature type="transmembrane region" description="Helical" evidence="2">
    <location>
        <begin position="50"/>
        <end position="70"/>
    </location>
</feature>
<feature type="transmembrane region" description="Helical" evidence="2">
    <location>
        <begin position="83"/>
        <end position="103"/>
    </location>
</feature>
<feature type="transmembrane region" description="Helical" evidence="2">
    <location>
        <begin position="104"/>
        <end position="124"/>
    </location>
</feature>
<feature type="region of interest" description="Polar">
    <location>
        <begin position="2"/>
        <end position="51"/>
    </location>
</feature>
<feature type="region of interest" description="Disordered" evidence="3">
    <location>
        <begin position="17"/>
        <end position="42"/>
    </location>
</feature>
<feature type="region of interest" description="Hydrophobic">
    <location>
        <begin position="52"/>
        <end position="123"/>
    </location>
</feature>
<feature type="region of interest" description="Disordered" evidence="3">
    <location>
        <begin position="155"/>
        <end position="187"/>
    </location>
</feature>
<feature type="compositionally biased region" description="Basic and acidic residues" evidence="3">
    <location>
        <begin position="33"/>
        <end position="42"/>
    </location>
</feature>
<feature type="compositionally biased region" description="Low complexity" evidence="3">
    <location>
        <begin position="155"/>
        <end position="169"/>
    </location>
</feature>
<feature type="compositionally biased region" description="Gly residues" evidence="3">
    <location>
        <begin position="170"/>
        <end position="187"/>
    </location>
</feature>
<feature type="modified residue" description="N-acetylalanine" evidence="1">
    <location>
        <position position="2"/>
    </location>
</feature>
<gene>
    <name type="primary">OLE18</name>
    <name type="synonym">OLE3</name>
</gene>
<proteinExistence type="evidence at protein level"/>
<dbReference type="EMBL" id="J05212">
    <property type="protein sequence ID" value="AAA67699.1"/>
    <property type="molecule type" value="Genomic_DNA"/>
</dbReference>
<dbReference type="PIR" id="A35040">
    <property type="entry name" value="A35040"/>
</dbReference>
<dbReference type="SMR" id="P21641"/>
<dbReference type="FunCoup" id="P21641">
    <property type="interactions" value="700"/>
</dbReference>
<dbReference type="STRING" id="4577.P21641"/>
<dbReference type="PaxDb" id="4577-AC206941.2_FGP002"/>
<dbReference type="MaizeGDB" id="65606"/>
<dbReference type="eggNOG" id="ENOG502S1R0">
    <property type="taxonomic scope" value="Eukaryota"/>
</dbReference>
<dbReference type="InParanoid" id="P21641"/>
<dbReference type="Proteomes" id="UP000007305">
    <property type="component" value="Unplaced"/>
</dbReference>
<dbReference type="ExpressionAtlas" id="P21641">
    <property type="expression patterns" value="baseline and differential"/>
</dbReference>
<dbReference type="GO" id="GO:0016020">
    <property type="term" value="C:membrane"/>
    <property type="evidence" value="ECO:0007669"/>
    <property type="project" value="UniProtKB-SubCell"/>
</dbReference>
<dbReference type="GO" id="GO:0012511">
    <property type="term" value="C:monolayer-surrounded lipid storage body"/>
    <property type="evidence" value="ECO:0000318"/>
    <property type="project" value="GO_Central"/>
</dbReference>
<dbReference type="GO" id="GO:0019915">
    <property type="term" value="P:lipid storage"/>
    <property type="evidence" value="ECO:0000318"/>
    <property type="project" value="GO_Central"/>
</dbReference>
<dbReference type="GO" id="GO:0050826">
    <property type="term" value="P:response to freezing"/>
    <property type="evidence" value="ECO:0000318"/>
    <property type="project" value="GO_Central"/>
</dbReference>
<dbReference type="GO" id="GO:0010344">
    <property type="term" value="P:seed oilbody biogenesis"/>
    <property type="evidence" value="ECO:0000318"/>
    <property type="project" value="GO_Central"/>
</dbReference>
<dbReference type="InterPro" id="IPR000136">
    <property type="entry name" value="Oleosin"/>
</dbReference>
<dbReference type="PANTHER" id="PTHR33203">
    <property type="entry name" value="OLEOSIN"/>
    <property type="match status" value="1"/>
</dbReference>
<dbReference type="PANTHER" id="PTHR33203:SF44">
    <property type="entry name" value="OLEOSIN 20.3 KDA"/>
    <property type="match status" value="1"/>
</dbReference>
<dbReference type="Pfam" id="PF01277">
    <property type="entry name" value="Oleosin"/>
    <property type="match status" value="1"/>
</dbReference>
<dbReference type="PROSITE" id="PS00811">
    <property type="entry name" value="OLEOSINS"/>
    <property type="match status" value="1"/>
</dbReference>
<name>OLEO3_MAIZE</name>
<sequence>MADRDRSGIYGGAHATYGQQQQQGGGGRPMGEQVKKGMLHDKGPTASQALTVATLFPLGGLLLVLSGLALTASVVGLAVATPVFLIFSPVLVPAALLIGTAVMGFLTSGALGLGGLSSLTCLANTARQAFQRTPDYVEEARRRMAEAAAQAGHKTAQAGQAIQGRAQEAGTGGGAGAGAGGGGRASS</sequence>
<organism>
    <name type="scientific">Zea mays</name>
    <name type="common">Maize</name>
    <dbReference type="NCBI Taxonomy" id="4577"/>
    <lineage>
        <taxon>Eukaryota</taxon>
        <taxon>Viridiplantae</taxon>
        <taxon>Streptophyta</taxon>
        <taxon>Embryophyta</taxon>
        <taxon>Tracheophyta</taxon>
        <taxon>Spermatophyta</taxon>
        <taxon>Magnoliopsida</taxon>
        <taxon>Liliopsida</taxon>
        <taxon>Poales</taxon>
        <taxon>Poaceae</taxon>
        <taxon>PACMAD clade</taxon>
        <taxon>Panicoideae</taxon>
        <taxon>Andropogonodae</taxon>
        <taxon>Andropogoneae</taxon>
        <taxon>Tripsacinae</taxon>
        <taxon>Zea</taxon>
    </lineage>
</organism>
<evidence type="ECO:0000250" key="1"/>
<evidence type="ECO:0000255" key="2"/>
<evidence type="ECO:0000256" key="3">
    <source>
        <dbReference type="SAM" id="MobiDB-lite"/>
    </source>
</evidence>
<evidence type="ECO:0000269" key="4">
    <source>
    </source>
</evidence>
<evidence type="ECO:0000305" key="5"/>
<reference key="1">
    <citation type="journal article" date="1990" name="J. Biol. Chem.">
        <title>Oleosin KD 18 on the surface of oil bodies in maize. Genomic and cDNA sequences and the deduced protein structure.</title>
        <authorList>
            <person name="Qu R."/>
            <person name="Huang A.H.C."/>
        </authorList>
    </citation>
    <scope>NUCLEOTIDE SEQUENCE [GENOMIC DNA]</scope>
    <scope>PROTEIN SEQUENCE OF 43-56</scope>
    <source>
        <strain>cv. Missouri 17</strain>
    </source>
</reference>
<reference key="2">
    <citation type="journal article" date="1994" name="Plant Mol. Biol.">
        <title>Genes encoding oleosins in maize kernel of inbreds Mo17 and B73.</title>
        <authorList>
            <person name="Lee K."/>
            <person name="Huang A.H.C."/>
        </authorList>
    </citation>
    <scope>NUCLEOTIDE SEQUENCE [GENOMIC DNA]</scope>
    <scope>TISSUE SPECIFICITY</scope>
    <scope>DEVELOPMENTAL STAGE</scope>
    <source>
        <strain>cv. B73</strain>
        <strain>cv. Missouri 17</strain>
    </source>
</reference>
<keyword id="KW-0007">Acetylation</keyword>
<keyword id="KW-0903">Direct protein sequencing</keyword>
<keyword id="KW-0551">Lipid droplet</keyword>
<keyword id="KW-0472">Membrane</keyword>
<keyword id="KW-1185">Reference proteome</keyword>
<keyword id="KW-0812">Transmembrane</keyword>
<keyword id="KW-1133">Transmembrane helix</keyword>
<comment type="function">
    <text>May have a structural role to stabilize the lipid body during desiccation of the seed by preventing coalescence of the oil. Probably interacts with both lipid and phospholipid moieties of lipid bodies. May also provide recognition signals for specific lipase anchorage in lipolysis during seedling growth.</text>
</comment>
<comment type="subcellular location">
    <subcellularLocation>
        <location>Lipid droplet</location>
    </subcellularLocation>
    <subcellularLocation>
        <location>Membrane</location>
        <topology>Multi-pass membrane protein</topology>
    </subcellularLocation>
    <text>Surface of oil bodies. Oleosins exist at a monolayer lipid/water interface.</text>
</comment>
<comment type="tissue specificity">
    <text evidence="4">Found in embryonic axis, scutellum, and aleurone layer.</text>
</comment>
<comment type="developmental stage">
    <text evidence="4">Expressed during seed maturation.</text>
</comment>
<comment type="PTM">
    <text>The N-terminus is blocked.</text>
</comment>
<comment type="similarity">
    <text evidence="5">Belongs to the oleosin family.</text>
</comment>